<name>NPL4_ASPOR</name>
<dbReference type="EMBL" id="BA000049">
    <property type="protein sequence ID" value="BAE55827.1"/>
    <property type="molecule type" value="Genomic_DNA"/>
</dbReference>
<dbReference type="SMR" id="Q2URI8"/>
<dbReference type="STRING" id="510516.Q2URI8"/>
<dbReference type="EnsemblFungi" id="BAE55827">
    <property type="protein sequence ID" value="BAE55827"/>
    <property type="gene ID" value="AO090005000811"/>
</dbReference>
<dbReference type="HOGENOM" id="CLU_017172_0_0_1"/>
<dbReference type="Proteomes" id="UP000006564">
    <property type="component" value="Chromosome 1"/>
</dbReference>
<dbReference type="GO" id="GO:0005789">
    <property type="term" value="C:endoplasmic reticulum membrane"/>
    <property type="evidence" value="ECO:0007669"/>
    <property type="project" value="UniProtKB-SubCell"/>
</dbReference>
<dbReference type="GO" id="GO:0031965">
    <property type="term" value="C:nuclear membrane"/>
    <property type="evidence" value="ECO:0007669"/>
    <property type="project" value="UniProtKB-SubCell"/>
</dbReference>
<dbReference type="GO" id="GO:0048471">
    <property type="term" value="C:perinuclear region of cytoplasm"/>
    <property type="evidence" value="ECO:0007669"/>
    <property type="project" value="UniProtKB-SubCell"/>
</dbReference>
<dbReference type="GO" id="GO:0043130">
    <property type="term" value="F:ubiquitin binding"/>
    <property type="evidence" value="ECO:0007669"/>
    <property type="project" value="TreeGrafter"/>
</dbReference>
<dbReference type="GO" id="GO:0031625">
    <property type="term" value="F:ubiquitin protein ligase binding"/>
    <property type="evidence" value="ECO:0007669"/>
    <property type="project" value="TreeGrafter"/>
</dbReference>
<dbReference type="GO" id="GO:0051028">
    <property type="term" value="P:mRNA transport"/>
    <property type="evidence" value="ECO:0007669"/>
    <property type="project" value="UniProtKB-KW"/>
</dbReference>
<dbReference type="GO" id="GO:0015031">
    <property type="term" value="P:protein transport"/>
    <property type="evidence" value="ECO:0007669"/>
    <property type="project" value="UniProtKB-KW"/>
</dbReference>
<dbReference type="GO" id="GO:0006511">
    <property type="term" value="P:ubiquitin-dependent protein catabolic process"/>
    <property type="evidence" value="ECO:0007669"/>
    <property type="project" value="InterPro"/>
</dbReference>
<dbReference type="CDD" id="cd08061">
    <property type="entry name" value="MPN_NPL4"/>
    <property type="match status" value="1"/>
</dbReference>
<dbReference type="Gene3D" id="3.40.140.10">
    <property type="entry name" value="Cytidine Deaminase, domain 2"/>
    <property type="match status" value="1"/>
</dbReference>
<dbReference type="Gene3D" id="3.10.20.90">
    <property type="entry name" value="Phosphatidylinositol 3-kinase Catalytic Subunit, Chain A, domain 1"/>
    <property type="match status" value="1"/>
</dbReference>
<dbReference type="InterPro" id="IPR037518">
    <property type="entry name" value="MPN"/>
</dbReference>
<dbReference type="InterPro" id="IPR016563">
    <property type="entry name" value="Npl4"/>
</dbReference>
<dbReference type="InterPro" id="IPR007717">
    <property type="entry name" value="NPL4_C"/>
</dbReference>
<dbReference type="InterPro" id="IPR007716">
    <property type="entry name" value="NPL4_Zn-bd_put"/>
</dbReference>
<dbReference type="InterPro" id="IPR029071">
    <property type="entry name" value="Ubiquitin-like_domsf"/>
</dbReference>
<dbReference type="PANTHER" id="PTHR12710">
    <property type="entry name" value="NUCLEAR PROTEIN LOCALIZATION 4"/>
    <property type="match status" value="1"/>
</dbReference>
<dbReference type="PANTHER" id="PTHR12710:SF0">
    <property type="entry name" value="NUCLEAR PROTEIN LOCALIZATION PROTEIN 4 HOMOLOG"/>
    <property type="match status" value="1"/>
</dbReference>
<dbReference type="Pfam" id="PF05021">
    <property type="entry name" value="NPL4"/>
    <property type="match status" value="1"/>
</dbReference>
<dbReference type="Pfam" id="PF05020">
    <property type="entry name" value="zf-NPL4"/>
    <property type="match status" value="1"/>
</dbReference>
<dbReference type="PIRSF" id="PIRSF010052">
    <property type="entry name" value="Polyub_prc_Npl4"/>
    <property type="match status" value="1"/>
</dbReference>
<dbReference type="SUPFAM" id="SSF54236">
    <property type="entry name" value="Ubiquitin-like"/>
    <property type="match status" value="1"/>
</dbReference>
<dbReference type="PROSITE" id="PS50249">
    <property type="entry name" value="MPN"/>
    <property type="match status" value="1"/>
</dbReference>
<sequence>MASRPIVLRFEGRNGQFRLTVSPQELFPSLKQKILEHLPPDTEPSSINLSNKPIGTGGDERLLDTLDGIALGTVGLKHGDKLYLGYQEKQSLQDGSANGHITNVSSRRLNGAPVPQTETVSLRPQPTSPTAVIKNPWDVVQQSPLDDALDKKDGKIKRNRDMKMCKHGPKGMCDYCMPLEPYDPKYLAEKKIKHLSFHSYLRKLNAATNKAELKSSFMPPLSEPYYRVRRDCPSGHPSWPEGICTKCQPSAISLQPQEFRTVDHVEFSSPDLINSLLDFWRKSGAQRLGFLYGTYEEYTEVPLGVKAVVQAIYEPPQVDEIDGVTLHEWHNEKEVDEVARLCGLEKVGVIFTDLLDAGQGDGSVICKRHIDSYFLSSLEITFAARLQAQYPKATKWSRTGRFGSNFVTCVLSGDEEGAISVSAYQASVAAVEMVRADIVEPSAEPSVMLVQSEEDDSENKSRYIPEVFYRKINEYGVSAQQNAKPAFPVEYLLVTLTHGFPTESSPLFVEGNFPIENREVIGESQELRHVAKKLVSHGDPDKAIRAVSDFHLLCFLHSLSTFSKDEEALLGRVATKHDPADGVQLISTPGWATLVTILQESGERPPKRPWLSSADSPRAVPQAGKRFFPSRPESPKSESEQLAKRFKGASLE</sequence>
<gene>
    <name type="primary">npl4</name>
    <name type="ORF">AO090005000811</name>
</gene>
<protein>
    <recommendedName>
        <fullName>Nuclear protein localization protein 4</fullName>
    </recommendedName>
</protein>
<feature type="chain" id="PRO_0000339436" description="Nuclear protein localization protein 4">
    <location>
        <begin position="1"/>
        <end position="652"/>
    </location>
</feature>
<feature type="domain" description="MPN" evidence="2">
    <location>
        <begin position="265"/>
        <end position="402"/>
    </location>
</feature>
<feature type="region of interest" description="Disordered" evidence="3">
    <location>
        <begin position="94"/>
        <end position="132"/>
    </location>
</feature>
<feature type="region of interest" description="Disordered" evidence="3">
    <location>
        <begin position="602"/>
        <end position="652"/>
    </location>
</feature>
<feature type="compositionally biased region" description="Polar residues" evidence="3">
    <location>
        <begin position="94"/>
        <end position="108"/>
    </location>
</feature>
<feature type="compositionally biased region" description="Polar residues" evidence="3">
    <location>
        <begin position="116"/>
        <end position="130"/>
    </location>
</feature>
<feature type="compositionally biased region" description="Basic and acidic residues" evidence="3">
    <location>
        <begin position="633"/>
        <end position="643"/>
    </location>
</feature>
<keyword id="KW-0963">Cytoplasm</keyword>
<keyword id="KW-0256">Endoplasmic reticulum</keyword>
<keyword id="KW-0472">Membrane</keyword>
<keyword id="KW-0509">mRNA transport</keyword>
<keyword id="KW-0539">Nucleus</keyword>
<keyword id="KW-0653">Protein transport</keyword>
<keyword id="KW-1185">Reference proteome</keyword>
<keyword id="KW-0811">Translocation</keyword>
<keyword id="KW-0813">Transport</keyword>
<proteinExistence type="inferred from homology"/>
<accession>Q2URI8</accession>
<comment type="function">
    <text evidence="1">Involved in the import of nuclear-targeted proteins into the nucleus and the export of poly(A) RNA out of the nucleus. Has a role in the endoplasmic reticulum-associated degradation (ERAD) pathway (By similarity).</text>
</comment>
<comment type="subcellular location">
    <subcellularLocation>
        <location evidence="1">Cytoplasm</location>
        <location evidence="1">Perinuclear region</location>
    </subcellularLocation>
    <subcellularLocation>
        <location evidence="1">Endoplasmic reticulum membrane</location>
        <topology evidence="1">Peripheral membrane protein</topology>
        <orientation evidence="1">Cytoplasmic side</orientation>
    </subcellularLocation>
    <subcellularLocation>
        <location evidence="1">Nucleus membrane</location>
        <topology evidence="1">Peripheral membrane protein</topology>
        <orientation evidence="1">Cytoplasmic side</orientation>
    </subcellularLocation>
    <text evidence="1">Localizes mainly at the nuclear periphery and the endoplasmic reticulum membrane.</text>
</comment>
<comment type="similarity">
    <text evidence="4">Belongs to the NPL4 family.</text>
</comment>
<organism>
    <name type="scientific">Aspergillus oryzae (strain ATCC 42149 / RIB 40)</name>
    <name type="common">Yellow koji mold</name>
    <dbReference type="NCBI Taxonomy" id="510516"/>
    <lineage>
        <taxon>Eukaryota</taxon>
        <taxon>Fungi</taxon>
        <taxon>Dikarya</taxon>
        <taxon>Ascomycota</taxon>
        <taxon>Pezizomycotina</taxon>
        <taxon>Eurotiomycetes</taxon>
        <taxon>Eurotiomycetidae</taxon>
        <taxon>Eurotiales</taxon>
        <taxon>Aspergillaceae</taxon>
        <taxon>Aspergillus</taxon>
        <taxon>Aspergillus subgen. Circumdati</taxon>
    </lineage>
</organism>
<reference key="1">
    <citation type="journal article" date="2005" name="Nature">
        <title>Genome sequencing and analysis of Aspergillus oryzae.</title>
        <authorList>
            <person name="Machida M."/>
            <person name="Asai K."/>
            <person name="Sano M."/>
            <person name="Tanaka T."/>
            <person name="Kumagai T."/>
            <person name="Terai G."/>
            <person name="Kusumoto K."/>
            <person name="Arima T."/>
            <person name="Akita O."/>
            <person name="Kashiwagi Y."/>
            <person name="Abe K."/>
            <person name="Gomi K."/>
            <person name="Horiuchi H."/>
            <person name="Kitamoto K."/>
            <person name="Kobayashi T."/>
            <person name="Takeuchi M."/>
            <person name="Denning D.W."/>
            <person name="Galagan J.E."/>
            <person name="Nierman W.C."/>
            <person name="Yu J."/>
            <person name="Archer D.B."/>
            <person name="Bennett J.W."/>
            <person name="Bhatnagar D."/>
            <person name="Cleveland T.E."/>
            <person name="Fedorova N.D."/>
            <person name="Gotoh O."/>
            <person name="Horikawa H."/>
            <person name="Hosoyama A."/>
            <person name="Ichinomiya M."/>
            <person name="Igarashi R."/>
            <person name="Iwashita K."/>
            <person name="Juvvadi P.R."/>
            <person name="Kato M."/>
            <person name="Kato Y."/>
            <person name="Kin T."/>
            <person name="Kokubun A."/>
            <person name="Maeda H."/>
            <person name="Maeyama N."/>
            <person name="Maruyama J."/>
            <person name="Nagasaki H."/>
            <person name="Nakajima T."/>
            <person name="Oda K."/>
            <person name="Okada K."/>
            <person name="Paulsen I."/>
            <person name="Sakamoto K."/>
            <person name="Sawano T."/>
            <person name="Takahashi M."/>
            <person name="Takase K."/>
            <person name="Terabayashi Y."/>
            <person name="Wortman J.R."/>
            <person name="Yamada O."/>
            <person name="Yamagata Y."/>
            <person name="Anazawa H."/>
            <person name="Hata Y."/>
            <person name="Koide Y."/>
            <person name="Komori T."/>
            <person name="Koyama Y."/>
            <person name="Minetoki T."/>
            <person name="Suharnan S."/>
            <person name="Tanaka A."/>
            <person name="Isono K."/>
            <person name="Kuhara S."/>
            <person name="Ogasawara N."/>
            <person name="Kikuchi H."/>
        </authorList>
    </citation>
    <scope>NUCLEOTIDE SEQUENCE [LARGE SCALE GENOMIC DNA]</scope>
    <source>
        <strain>ATCC 42149 / RIB 40</strain>
    </source>
</reference>
<evidence type="ECO:0000250" key="1"/>
<evidence type="ECO:0000255" key="2">
    <source>
        <dbReference type="PROSITE-ProRule" id="PRU01182"/>
    </source>
</evidence>
<evidence type="ECO:0000256" key="3">
    <source>
        <dbReference type="SAM" id="MobiDB-lite"/>
    </source>
</evidence>
<evidence type="ECO:0000305" key="4"/>